<reference key="1">
    <citation type="journal article" date="2004" name="Proc. Natl. Acad. Sci. U.S.A.">
        <title>The complete genomic sequence of Nocardia farcinica IFM 10152.</title>
        <authorList>
            <person name="Ishikawa J."/>
            <person name="Yamashita A."/>
            <person name="Mikami Y."/>
            <person name="Hoshino Y."/>
            <person name="Kurita H."/>
            <person name="Hotta K."/>
            <person name="Shiba T."/>
            <person name="Hattori M."/>
        </authorList>
    </citation>
    <scope>NUCLEOTIDE SEQUENCE [LARGE SCALE GENOMIC DNA]</scope>
    <source>
        <strain>IFM 10152</strain>
    </source>
</reference>
<evidence type="ECO:0000255" key="1">
    <source>
        <dbReference type="HAMAP-Rule" id="MF_01310"/>
    </source>
</evidence>
<evidence type="ECO:0000256" key="2">
    <source>
        <dbReference type="SAM" id="MobiDB-lite"/>
    </source>
</evidence>
<evidence type="ECO:0000305" key="3"/>
<dbReference type="EMBL" id="AP006618">
    <property type="protein sequence ID" value="BAD55680.1"/>
    <property type="molecule type" value="Genomic_DNA"/>
</dbReference>
<dbReference type="RefSeq" id="WP_011207365.1">
    <property type="nucleotide sequence ID" value="NC_006361.1"/>
</dbReference>
<dbReference type="SMR" id="Q5Z1L1"/>
<dbReference type="STRING" id="247156.NFA_8350"/>
<dbReference type="GeneID" id="61131663"/>
<dbReference type="KEGG" id="nfa:NFA_8350"/>
<dbReference type="eggNOG" id="COG0100">
    <property type="taxonomic scope" value="Bacteria"/>
</dbReference>
<dbReference type="HOGENOM" id="CLU_072439_5_0_11"/>
<dbReference type="OrthoDB" id="9806415at2"/>
<dbReference type="Proteomes" id="UP000006820">
    <property type="component" value="Chromosome"/>
</dbReference>
<dbReference type="GO" id="GO:1990904">
    <property type="term" value="C:ribonucleoprotein complex"/>
    <property type="evidence" value="ECO:0007669"/>
    <property type="project" value="UniProtKB-KW"/>
</dbReference>
<dbReference type="GO" id="GO:0005840">
    <property type="term" value="C:ribosome"/>
    <property type="evidence" value="ECO:0007669"/>
    <property type="project" value="UniProtKB-KW"/>
</dbReference>
<dbReference type="GO" id="GO:0019843">
    <property type="term" value="F:rRNA binding"/>
    <property type="evidence" value="ECO:0007669"/>
    <property type="project" value="UniProtKB-UniRule"/>
</dbReference>
<dbReference type="GO" id="GO:0003735">
    <property type="term" value="F:structural constituent of ribosome"/>
    <property type="evidence" value="ECO:0007669"/>
    <property type="project" value="InterPro"/>
</dbReference>
<dbReference type="GO" id="GO:0006412">
    <property type="term" value="P:translation"/>
    <property type="evidence" value="ECO:0007669"/>
    <property type="project" value="UniProtKB-UniRule"/>
</dbReference>
<dbReference type="FunFam" id="3.30.420.80:FF:000001">
    <property type="entry name" value="30S ribosomal protein S11"/>
    <property type="match status" value="1"/>
</dbReference>
<dbReference type="Gene3D" id="3.30.420.80">
    <property type="entry name" value="Ribosomal protein S11"/>
    <property type="match status" value="1"/>
</dbReference>
<dbReference type="HAMAP" id="MF_01310">
    <property type="entry name" value="Ribosomal_uS11"/>
    <property type="match status" value="1"/>
</dbReference>
<dbReference type="InterPro" id="IPR001971">
    <property type="entry name" value="Ribosomal_uS11"/>
</dbReference>
<dbReference type="InterPro" id="IPR019981">
    <property type="entry name" value="Ribosomal_uS11_bac-type"/>
</dbReference>
<dbReference type="InterPro" id="IPR018102">
    <property type="entry name" value="Ribosomal_uS11_CS"/>
</dbReference>
<dbReference type="InterPro" id="IPR036967">
    <property type="entry name" value="Ribosomal_uS11_sf"/>
</dbReference>
<dbReference type="NCBIfam" id="NF003698">
    <property type="entry name" value="PRK05309.1"/>
    <property type="match status" value="1"/>
</dbReference>
<dbReference type="NCBIfam" id="TIGR03632">
    <property type="entry name" value="uS11_bact"/>
    <property type="match status" value="1"/>
</dbReference>
<dbReference type="PANTHER" id="PTHR11759">
    <property type="entry name" value="40S RIBOSOMAL PROTEIN S14/30S RIBOSOMAL PROTEIN S11"/>
    <property type="match status" value="1"/>
</dbReference>
<dbReference type="Pfam" id="PF00411">
    <property type="entry name" value="Ribosomal_S11"/>
    <property type="match status" value="1"/>
</dbReference>
<dbReference type="PIRSF" id="PIRSF002131">
    <property type="entry name" value="Ribosomal_S11"/>
    <property type="match status" value="1"/>
</dbReference>
<dbReference type="SUPFAM" id="SSF53137">
    <property type="entry name" value="Translational machinery components"/>
    <property type="match status" value="1"/>
</dbReference>
<dbReference type="PROSITE" id="PS00054">
    <property type="entry name" value="RIBOSOMAL_S11"/>
    <property type="match status" value="1"/>
</dbReference>
<feature type="chain" id="PRO_0000123189" description="Small ribosomal subunit protein uS11">
    <location>
        <begin position="1"/>
        <end position="137"/>
    </location>
</feature>
<feature type="region of interest" description="Disordered" evidence="2">
    <location>
        <begin position="1"/>
        <end position="32"/>
    </location>
</feature>
<feature type="region of interest" description="Disordered" evidence="2">
    <location>
        <begin position="118"/>
        <end position="137"/>
    </location>
</feature>
<feature type="compositionally biased region" description="Basic residues" evidence="2">
    <location>
        <begin position="12"/>
        <end position="21"/>
    </location>
</feature>
<protein>
    <recommendedName>
        <fullName evidence="1">Small ribosomal subunit protein uS11</fullName>
    </recommendedName>
    <alternativeName>
        <fullName evidence="3">30S ribosomal protein S11</fullName>
    </alternativeName>
</protein>
<name>RS11_NOCFA</name>
<organism>
    <name type="scientific">Nocardia farcinica (strain IFM 10152)</name>
    <dbReference type="NCBI Taxonomy" id="247156"/>
    <lineage>
        <taxon>Bacteria</taxon>
        <taxon>Bacillati</taxon>
        <taxon>Actinomycetota</taxon>
        <taxon>Actinomycetes</taxon>
        <taxon>Mycobacteriales</taxon>
        <taxon>Nocardiaceae</taxon>
        <taxon>Nocardia</taxon>
    </lineage>
</organism>
<accession>Q5Z1L1</accession>
<comment type="function">
    <text evidence="1">Located on the platform of the 30S subunit, it bridges several disparate RNA helices of the 16S rRNA. Forms part of the Shine-Dalgarno cleft in the 70S ribosome.</text>
</comment>
<comment type="subunit">
    <text evidence="1">Part of the 30S ribosomal subunit. Interacts with proteins S7 and S18. Binds to IF-3.</text>
</comment>
<comment type="similarity">
    <text evidence="1">Belongs to the universal ribosomal protein uS11 family.</text>
</comment>
<gene>
    <name evidence="1" type="primary">rpsK</name>
    <name type="ordered locus">NFA_8350</name>
</gene>
<keyword id="KW-1185">Reference proteome</keyword>
<keyword id="KW-0687">Ribonucleoprotein</keyword>
<keyword id="KW-0689">Ribosomal protein</keyword>
<keyword id="KW-0694">RNA-binding</keyword>
<keyword id="KW-0699">rRNA-binding</keyword>
<proteinExistence type="inferred from homology"/>
<sequence length="137" mass="14696">MPPKSRASGPKKTQKSRRRDKKNVPHGNAHIKSTFNNTIVSITDPNGNVISWASSGHVGFKGSRKSTPFAAQLAAENAARKAQEHGVKKVDVFVKGPGSGRETAIRSLQAAGLEVGTISDVTPQPHNGCRPPKRRRV</sequence>